<organism>
    <name type="scientific">Pseudomonas aeruginosa (strain ATCC 15692 / DSM 22644 / CIP 104116 / JCM 14847 / LMG 12228 / 1C / PRS 101 / PAO1)</name>
    <dbReference type="NCBI Taxonomy" id="208964"/>
    <lineage>
        <taxon>Bacteria</taxon>
        <taxon>Pseudomonadati</taxon>
        <taxon>Pseudomonadota</taxon>
        <taxon>Gammaproteobacteria</taxon>
        <taxon>Pseudomonadales</taxon>
        <taxon>Pseudomonadaceae</taxon>
        <taxon>Pseudomonas</taxon>
    </lineage>
</organism>
<comment type="function">
    <text evidence="2 3">Catalyzes the sulfur transfer reaction from thiosulfate to cyanide, thus converting cyanide to the less toxic thiocyanate (PubMed:15522204). Contributes to P.aeruginosa survival under cyanogenic conditions, and thus provides the bacterium with a defense mechanism against endogenous cyanide toxicity (PubMed:17098912). Is the main cytoplasmic rhodanese in P.aeruginosa, accounting for 90% of total rhodanese activity (PubMed:17098912).</text>
</comment>
<comment type="catalytic activity">
    <reaction evidence="2">
        <text>thiosulfate + hydrogen cyanide = thiocyanate + sulfite + 2 H(+)</text>
        <dbReference type="Rhea" id="RHEA:16881"/>
        <dbReference type="ChEBI" id="CHEBI:15378"/>
        <dbReference type="ChEBI" id="CHEBI:17359"/>
        <dbReference type="ChEBI" id="CHEBI:18022"/>
        <dbReference type="ChEBI" id="CHEBI:18407"/>
        <dbReference type="ChEBI" id="CHEBI:33542"/>
        <dbReference type="EC" id="2.8.1.1"/>
    </reaction>
</comment>
<comment type="biophysicochemical properties">
    <kinetics>
        <KM evidence="2">1 mM for thiosulfate (at pH 7.3 and 25 degrees Celsius)</KM>
        <KM evidence="2">7.4 mM for thiosulfate (at pH 8.6 and 25 degrees Celsius)</KM>
        <KM evidence="2">12 mM for cyanide (at pH 7.3 and 25 degrees Celsius)</KM>
        <KM evidence="2">16 mM for cyanide (at pH 8.6 and 25 degrees Celsius)</KM>
        <Vmax evidence="2">750.0 umol/min/mg enzyme (at 25 degrees Celsius)</Vmax>
    </kinetics>
    <temperatureDependence>
        <text evidence="2">Optimum temperature is 20-32 degrees Celsius.</text>
    </temperatureDependence>
</comment>
<comment type="subcellular location">
    <subcellularLocation>
        <location evidence="3">Cytoplasm</location>
    </subcellularLocation>
</comment>
<comment type="induction">
    <text evidence="3">Is constitutively expressed during the entire growth cycle. Expression increases during exponential growth to attain a maximum level at the onset of the stationary phase, slightly decreasing thereafter.</text>
</comment>
<comment type="disruption phenotype">
    <text evidence="3">The growth of a rhdA-deletion mutant is impaired under cyanogenic conditions and fully restored upon complementation with rhdA. When P.aeruginosa cultures are treated with exogenous cyanide, only minor differences in viability between the rhdA-deletion mutant and the wild-type are observed.</text>
</comment>
<comment type="biotechnology">
    <text evidence="7">Microbial rhodaneses may contribute to cyanide detoxification in natural environments.</text>
</comment>
<evidence type="ECO:0000255" key="1">
    <source>
        <dbReference type="PROSITE-ProRule" id="PRU00173"/>
    </source>
</evidence>
<evidence type="ECO:0000269" key="2">
    <source>
    </source>
</evidence>
<evidence type="ECO:0000269" key="3">
    <source>
    </source>
</evidence>
<evidence type="ECO:0000303" key="4">
    <source>
    </source>
</evidence>
<evidence type="ECO:0000303" key="5">
    <source>
    </source>
</evidence>
<evidence type="ECO:0000305" key="6"/>
<evidence type="ECO:0000305" key="7">
    <source>
    </source>
</evidence>
<evidence type="ECO:0000312" key="8">
    <source>
        <dbReference type="EMBL" id="AAG08341.1"/>
    </source>
</evidence>
<keyword id="KW-0963">Cytoplasm</keyword>
<keyword id="KW-0216">Detoxification</keyword>
<keyword id="KW-1185">Reference proteome</keyword>
<keyword id="KW-0677">Repeat</keyword>
<keyword id="KW-0808">Transferase</keyword>
<gene>
    <name evidence="4 8" type="primary">rhdA</name>
    <name evidence="8" type="ordered locus">PA4956</name>
</gene>
<reference key="1">
    <citation type="journal article" date="2000" name="Nature">
        <title>Complete genome sequence of Pseudomonas aeruginosa PAO1, an opportunistic pathogen.</title>
        <authorList>
            <person name="Stover C.K."/>
            <person name="Pham X.-Q.T."/>
            <person name="Erwin A.L."/>
            <person name="Mizoguchi S.D."/>
            <person name="Warrener P."/>
            <person name="Hickey M.J."/>
            <person name="Brinkman F.S.L."/>
            <person name="Hufnagle W.O."/>
            <person name="Kowalik D.J."/>
            <person name="Lagrou M."/>
            <person name="Garber R.L."/>
            <person name="Goltry L."/>
            <person name="Tolentino E."/>
            <person name="Westbrock-Wadman S."/>
            <person name="Yuan Y."/>
            <person name="Brody L.L."/>
            <person name="Coulter S.N."/>
            <person name="Folger K.R."/>
            <person name="Kas A."/>
            <person name="Larbig K."/>
            <person name="Lim R.M."/>
            <person name="Smith K.A."/>
            <person name="Spencer D.H."/>
            <person name="Wong G.K.-S."/>
            <person name="Wu Z."/>
            <person name="Paulsen I.T."/>
            <person name="Reizer J."/>
            <person name="Saier M.H. Jr."/>
            <person name="Hancock R.E.W."/>
            <person name="Lory S."/>
            <person name="Olson M.V."/>
        </authorList>
    </citation>
    <scope>NUCLEOTIDE SEQUENCE [LARGE SCALE GENOMIC DNA]</scope>
    <source>
        <strain>ATCC 15692 / DSM 22644 / CIP 104116 / JCM 14847 / LMG 12228 / 1C / PRS 101 / PAO1</strain>
    </source>
</reference>
<reference key="2">
    <citation type="journal article" date="2004" name="Biochem. Biophys. Res. Commun.">
        <title>Characterization of a rhodanese from the cyanogenic bacterium Pseudomonas aeruginosa.</title>
        <authorList>
            <person name="Cipollone R."/>
            <person name="Bigotti M.G."/>
            <person name="Frangipani E."/>
            <person name="Ascenzi P."/>
            <person name="Visca P."/>
        </authorList>
    </citation>
    <scope>FUNCTION</scope>
    <scope>CATALYTIC ACTIVITY</scope>
    <scope>BIOPHYSICOCHEMICAL PROPERTIES</scope>
    <scope>ACTIVE SITE</scope>
    <source>
        <strain>ATCC 15692 / DSM 22644 / CIP 104116 / JCM 14847 / LMG 12228 / 1C / PRS 101 / PAO1</strain>
    </source>
</reference>
<reference key="3">
    <citation type="journal article" date="2006" name="Chemosphere">
        <title>Cyanide detoxification by recombinant bacterial rhodanese.</title>
        <authorList>
            <person name="Cipollone R."/>
            <person name="Ascenzi P."/>
            <person name="Frangipani E."/>
            <person name="Visca P."/>
        </authorList>
    </citation>
    <scope>BIOTECHNOLOGY</scope>
    <source>
        <strain>ATCC 15692 / DSM 22644 / CIP 104116 / JCM 14847 / LMG 12228 / 1C / PRS 101 / PAO1</strain>
    </source>
</reference>
<reference key="4">
    <citation type="journal article" date="2007" name="Appl. Environ. Microbiol.">
        <title>Involvement of Pseudomonas aeruginosa rhodanese in protection from cyanide toxicity.</title>
        <authorList>
            <person name="Cipollone R."/>
            <person name="Frangipani E."/>
            <person name="Tiburzi F."/>
            <person name="Imperi F."/>
            <person name="Ascenzi P."/>
            <person name="Visca P."/>
        </authorList>
    </citation>
    <scope>FUNCTION</scope>
    <scope>DISRUPTION PHENOTYPE</scope>
    <scope>INDUCTION</scope>
    <scope>SUBCELLULAR LOCATION</scope>
    <source>
        <strain>ATCC 15692 / DSM 22644 / CIP 104116 / JCM 14847 / LMG 12228 / 1C / PRS 101 / PAO1</strain>
    </source>
</reference>
<sequence length="271" mass="29391">MSVFSDLPLVIEPSDLAPRLGAPELILVDLTSAARYAEGHIPGARFVDPKRTQWGQPPAPGLLPAKADLEALFGELGHRPEATYVVYDDEGGGWAGRFIWLLDVIGHHHYHYLNGGLPAWIADAQALDREVPAPVGGPLPLTLHDEPSATREYLQSRLGAADLAVWDARNPSEYAGTKVLAAKAGHVPGAINFEWTAGMDPARALRIRADIAEVLEDLGITPDKEVITHCQTHHRSGFTYLVAKALGYPRVKGYAGSWSEWGNHPDTPVEV</sequence>
<proteinExistence type="evidence at protein level"/>
<feature type="chain" id="PRO_0000439091" description="Thiosulfate sulfurtransferase">
    <location>
        <begin position="1"/>
        <end position="271"/>
    </location>
</feature>
<feature type="domain" description="Rhodanese 1" evidence="1">
    <location>
        <begin position="21"/>
        <end position="129"/>
    </location>
</feature>
<feature type="domain" description="Rhodanese 2" evidence="1">
    <location>
        <begin position="159"/>
        <end position="270"/>
    </location>
</feature>
<feature type="active site" description="Cysteine persulfide intermediate" evidence="1 2">
    <location>
        <position position="230"/>
    </location>
</feature>
<protein>
    <recommendedName>
        <fullName evidence="6">Thiosulfate sulfurtransferase</fullName>
        <shortName evidence="5">TST</shortName>
        <ecNumber evidence="2">2.8.1.1</ecNumber>
    </recommendedName>
    <alternativeName>
        <fullName evidence="5">Rhodanese RhdA</fullName>
    </alternativeName>
    <alternativeName>
        <fullName evidence="4">Thiosulfate:cyanide sulfurtransferase</fullName>
    </alternativeName>
</protein>
<dbReference type="EC" id="2.8.1.1" evidence="2"/>
<dbReference type="EMBL" id="AE004091">
    <property type="protein sequence ID" value="AAG08341.1"/>
    <property type="molecule type" value="Genomic_DNA"/>
</dbReference>
<dbReference type="PIR" id="B83027">
    <property type="entry name" value="B83027"/>
</dbReference>
<dbReference type="RefSeq" id="NP_253643.1">
    <property type="nucleotide sequence ID" value="NC_002516.2"/>
</dbReference>
<dbReference type="RefSeq" id="WP_003113925.1">
    <property type="nucleotide sequence ID" value="NZ_QZGE01000002.1"/>
</dbReference>
<dbReference type="SMR" id="Q9HUK9"/>
<dbReference type="STRING" id="208964.PA4956"/>
<dbReference type="PaxDb" id="208964-PA4956"/>
<dbReference type="DNASU" id="879172"/>
<dbReference type="GeneID" id="879172"/>
<dbReference type="KEGG" id="pae:PA4956"/>
<dbReference type="PATRIC" id="fig|208964.12.peg.5189"/>
<dbReference type="PseudoCAP" id="PA4956"/>
<dbReference type="HOGENOM" id="CLU_031618_1_7_6"/>
<dbReference type="InParanoid" id="Q9HUK9"/>
<dbReference type="OrthoDB" id="9781034at2"/>
<dbReference type="PhylomeDB" id="Q9HUK9"/>
<dbReference type="BioCyc" id="PAER208964:G1FZ6-5072-MONOMER"/>
<dbReference type="Proteomes" id="UP000002438">
    <property type="component" value="Chromosome"/>
</dbReference>
<dbReference type="GO" id="GO:0005737">
    <property type="term" value="C:cytoplasm"/>
    <property type="evidence" value="ECO:0007669"/>
    <property type="project" value="UniProtKB-SubCell"/>
</dbReference>
<dbReference type="GO" id="GO:0004792">
    <property type="term" value="F:thiosulfate-cyanide sulfurtransferase activity"/>
    <property type="evidence" value="ECO:0000315"/>
    <property type="project" value="PseudoCAP"/>
</dbReference>
<dbReference type="GO" id="GO:0009636">
    <property type="term" value="P:response to toxic substance"/>
    <property type="evidence" value="ECO:0007669"/>
    <property type="project" value="UniProtKB-KW"/>
</dbReference>
<dbReference type="CDD" id="cd01448">
    <property type="entry name" value="TST_Repeat_1"/>
    <property type="match status" value="1"/>
</dbReference>
<dbReference type="CDD" id="cd01449">
    <property type="entry name" value="TST_Repeat_2"/>
    <property type="match status" value="1"/>
</dbReference>
<dbReference type="Gene3D" id="3.40.250.10">
    <property type="entry name" value="Rhodanese-like domain"/>
    <property type="match status" value="2"/>
</dbReference>
<dbReference type="InterPro" id="IPR001763">
    <property type="entry name" value="Rhodanese-like_dom"/>
</dbReference>
<dbReference type="InterPro" id="IPR036873">
    <property type="entry name" value="Rhodanese-like_dom_sf"/>
</dbReference>
<dbReference type="InterPro" id="IPR051126">
    <property type="entry name" value="Thiosulfate_sulfurtransferase"/>
</dbReference>
<dbReference type="InterPro" id="IPR001307">
    <property type="entry name" value="Thiosulphate_STrfase_CS"/>
</dbReference>
<dbReference type="PANTHER" id="PTHR43855">
    <property type="entry name" value="THIOSULFATE SULFURTRANSFERASE"/>
    <property type="match status" value="1"/>
</dbReference>
<dbReference type="PANTHER" id="PTHR43855:SF1">
    <property type="entry name" value="THIOSULFATE SULFURTRANSFERASE"/>
    <property type="match status" value="1"/>
</dbReference>
<dbReference type="Pfam" id="PF00581">
    <property type="entry name" value="Rhodanese"/>
    <property type="match status" value="2"/>
</dbReference>
<dbReference type="SMART" id="SM00450">
    <property type="entry name" value="RHOD"/>
    <property type="match status" value="2"/>
</dbReference>
<dbReference type="SUPFAM" id="SSF52821">
    <property type="entry name" value="Rhodanese/Cell cycle control phosphatase"/>
    <property type="match status" value="2"/>
</dbReference>
<dbReference type="PROSITE" id="PS00380">
    <property type="entry name" value="RHODANESE_1"/>
    <property type="match status" value="1"/>
</dbReference>
<dbReference type="PROSITE" id="PS00683">
    <property type="entry name" value="RHODANESE_2"/>
    <property type="match status" value="1"/>
</dbReference>
<dbReference type="PROSITE" id="PS50206">
    <property type="entry name" value="RHODANESE_3"/>
    <property type="match status" value="2"/>
</dbReference>
<name>THTR_PSEAE</name>
<accession>Q9HUK9</accession>